<reference key="1">
    <citation type="journal article" date="1998" name="Biochem. J.">
        <title>Nerve growth factor- and epidermal growth factor-stimulated translocation of the ADP-ribosylation factor-exchange factor GRP1 to the plasma membrane of PC12 cells requires activation of phosphatidylinositol 3-kinase and the GRP1 pleckstrin homology domain.</title>
        <authorList>
            <person name="Venkateswarlu K."/>
            <person name="Gunn-Moore F."/>
            <person name="Oatey P.B."/>
            <person name="Tavare J.M."/>
            <person name="Cullen P.J."/>
        </authorList>
    </citation>
    <scope>NUCLEOTIDE SEQUENCE [MRNA] (ISOFORM 2)</scope>
    <scope>LIPID-BINDING</scope>
    <scope>DOMAIN</scope>
    <scope>SUBCELLULAR LOCATION</scope>
</reference>
<reference key="2">
    <citation type="journal article" date="1998" name="Proc. Natl. Acad. Sci. U.S.A.">
        <title>ARNO3, a Sec7-domain guanine nucleotide exchange factor for ADP ribosylation factor 1, is involved in the control of Golgi structure and function.</title>
        <authorList>
            <person name="Franco M."/>
            <person name="Boretto J."/>
            <person name="Robineau S."/>
            <person name="Monier S."/>
            <person name="Goud B."/>
            <person name="Chardin P."/>
            <person name="Chavrier P."/>
        </authorList>
    </citation>
    <scope>NUCLEOTIDE SEQUENCE [MRNA] (ISOFORM 2)</scope>
    <scope>FUNCTION</scope>
    <source>
        <tissue>Placenta</tissue>
    </source>
</reference>
<reference key="3">
    <citation type="journal article" date="2003" name="Science">
        <title>Human chromosome 7: DNA sequence and biology.</title>
        <authorList>
            <person name="Scherer S.W."/>
            <person name="Cheung J."/>
            <person name="MacDonald J.R."/>
            <person name="Osborne L.R."/>
            <person name="Nakabayashi K."/>
            <person name="Herbrick J.-A."/>
            <person name="Carson A.R."/>
            <person name="Parker-Katiraee L."/>
            <person name="Skaug J."/>
            <person name="Khaja R."/>
            <person name="Zhang J."/>
            <person name="Hudek A.K."/>
            <person name="Li M."/>
            <person name="Haddad M."/>
            <person name="Duggan G.E."/>
            <person name="Fernandez B.A."/>
            <person name="Kanematsu E."/>
            <person name="Gentles S."/>
            <person name="Christopoulos C.C."/>
            <person name="Choufani S."/>
            <person name="Kwasnicka D."/>
            <person name="Zheng X.H."/>
            <person name="Lai Z."/>
            <person name="Nusskern D.R."/>
            <person name="Zhang Q."/>
            <person name="Gu Z."/>
            <person name="Lu F."/>
            <person name="Zeesman S."/>
            <person name="Nowaczyk M.J."/>
            <person name="Teshima I."/>
            <person name="Chitayat D."/>
            <person name="Shuman C."/>
            <person name="Weksberg R."/>
            <person name="Zackai E.H."/>
            <person name="Grebe T.A."/>
            <person name="Cox S.R."/>
            <person name="Kirkpatrick S.J."/>
            <person name="Rahman N."/>
            <person name="Friedman J.M."/>
            <person name="Heng H.H.Q."/>
            <person name="Pelicci P.G."/>
            <person name="Lo-Coco F."/>
            <person name="Belloni E."/>
            <person name="Shaffer L.G."/>
            <person name="Pober B."/>
            <person name="Morton C.C."/>
            <person name="Gusella J.F."/>
            <person name="Bruns G.A.P."/>
            <person name="Korf B.R."/>
            <person name="Quade B.J."/>
            <person name="Ligon A.H."/>
            <person name="Ferguson H."/>
            <person name="Higgins A.W."/>
            <person name="Leach N.T."/>
            <person name="Herrick S.R."/>
            <person name="Lemyre E."/>
            <person name="Farra C.G."/>
            <person name="Kim H.-G."/>
            <person name="Summers A.M."/>
            <person name="Gripp K.W."/>
            <person name="Roberts W."/>
            <person name="Szatmari P."/>
            <person name="Winsor E.J.T."/>
            <person name="Grzeschik K.-H."/>
            <person name="Teebi A."/>
            <person name="Minassian B.A."/>
            <person name="Kere J."/>
            <person name="Armengol L."/>
            <person name="Pujana M.A."/>
            <person name="Estivill X."/>
            <person name="Wilson M.D."/>
            <person name="Koop B.F."/>
            <person name="Tosi S."/>
            <person name="Moore G.E."/>
            <person name="Boright A.P."/>
            <person name="Zlotorynski E."/>
            <person name="Kerem B."/>
            <person name="Kroisel P.M."/>
            <person name="Petek E."/>
            <person name="Oscier D.G."/>
            <person name="Mould S.J."/>
            <person name="Doehner H."/>
            <person name="Doehner K."/>
            <person name="Rommens J.M."/>
            <person name="Vincent J.B."/>
            <person name="Venter J.C."/>
            <person name="Li P.W."/>
            <person name="Mural R.J."/>
            <person name="Adams M.D."/>
            <person name="Tsui L.-C."/>
        </authorList>
    </citation>
    <scope>NUCLEOTIDE SEQUENCE [LARGE SCALE GENOMIC DNA]</scope>
</reference>
<reference key="4">
    <citation type="submission" date="2005-07" db="EMBL/GenBank/DDBJ databases">
        <authorList>
            <person name="Mural R.J."/>
            <person name="Istrail S."/>
            <person name="Sutton G.G."/>
            <person name="Florea L."/>
            <person name="Halpern A.L."/>
            <person name="Mobarry C.M."/>
            <person name="Lippert R."/>
            <person name="Walenz B."/>
            <person name="Shatkay H."/>
            <person name="Dew I."/>
            <person name="Miller J.R."/>
            <person name="Flanigan M.J."/>
            <person name="Edwards N.J."/>
            <person name="Bolanos R."/>
            <person name="Fasulo D."/>
            <person name="Halldorsson B.V."/>
            <person name="Hannenhalli S."/>
            <person name="Turner R."/>
            <person name="Yooseph S."/>
            <person name="Lu F."/>
            <person name="Nusskern D.R."/>
            <person name="Shue B.C."/>
            <person name="Zheng X.H."/>
            <person name="Zhong F."/>
            <person name="Delcher A.L."/>
            <person name="Huson D.H."/>
            <person name="Kravitz S.A."/>
            <person name="Mouchard L."/>
            <person name="Reinert K."/>
            <person name="Remington K.A."/>
            <person name="Clark A.G."/>
            <person name="Waterman M.S."/>
            <person name="Eichler E.E."/>
            <person name="Adams M.D."/>
            <person name="Hunkapiller M.W."/>
            <person name="Myers E.W."/>
            <person name="Venter J.C."/>
        </authorList>
    </citation>
    <scope>NUCLEOTIDE SEQUENCE [LARGE SCALE GENOMIC DNA]</scope>
</reference>
<reference key="5">
    <citation type="journal article" date="2004" name="Genome Res.">
        <title>The status, quality, and expansion of the NIH full-length cDNA project: the Mammalian Gene Collection (MGC).</title>
        <authorList>
            <consortium name="The MGC Project Team"/>
        </authorList>
    </citation>
    <scope>NUCLEOTIDE SEQUENCE [LARGE SCALE MRNA] (ISOFORM 2)</scope>
    <source>
        <tissue>Brain</tissue>
    </source>
</reference>
<reference key="6">
    <citation type="journal article" date="2000" name="J. Biol. Chem.">
        <title>Similarities in function and gene structure of cytohesin-4 and cytohesin-1, guanine nucleotide-exchange proteins for ADP-ribosylation factors.</title>
        <authorList>
            <person name="Ogasawara M."/>
            <person name="Kim S.C."/>
            <person name="Adamik R."/>
            <person name="Togawa A."/>
            <person name="Ferrans V.J."/>
            <person name="Takeda K."/>
            <person name="Kirby M."/>
            <person name="Moss J."/>
            <person name="Vaughan M."/>
        </authorList>
    </citation>
    <scope>ALTERNATIVE SPLICING</scope>
</reference>
<reference key="7">
    <citation type="journal article" date="2007" name="Curr. Biol.">
        <title>The Arl4 family of small G proteins can recruit the cytohesin Arf6 exchange factors to the plasma membrane.</title>
        <authorList>
            <person name="Hofmann I."/>
            <person name="Thompson A."/>
            <person name="Sanderson C.M."/>
            <person name="Munro S."/>
        </authorList>
    </citation>
    <scope>SUBCELLULAR LOCATION</scope>
</reference>
<reference key="8">
    <citation type="journal article" date="2013" name="Proc. Natl. Acad. Sci. U.S.A.">
        <title>Structural basis for membrane recruitment and allosteric activation of cytohesin family Arf GTPase exchange factors.</title>
        <authorList>
            <person name="Malaby A.W."/>
            <person name="van den Berg B."/>
            <person name="Lambright D.G."/>
        </authorList>
    </citation>
    <scope>X-RAY CRYSTALLOGRAPHY (1.85 ANGSTROMS) OF 247-400 IN COMPLEX WITH PHOSPHATIDYLINOSITOL 3,4,5-TRISPHOSPHATE AND ARF6</scope>
    <scope>FUNCTION</scope>
    <scope>DOMAIN</scope>
    <scope>LIPID-BINDING</scope>
    <scope>MUTAGENESIS OF 398-ASN--LYS-400</scope>
    <scope>AUTOINHIBITORY REGION</scope>
    <scope>INTERACTION WITH ARF6</scope>
</reference>
<evidence type="ECO:0000250" key="1">
    <source>
        <dbReference type="UniProtKB" id="O08967"/>
    </source>
</evidence>
<evidence type="ECO:0000255" key="2"/>
<evidence type="ECO:0000255" key="3">
    <source>
        <dbReference type="PROSITE-ProRule" id="PRU00145"/>
    </source>
</evidence>
<evidence type="ECO:0000255" key="4">
    <source>
        <dbReference type="PROSITE-ProRule" id="PRU00189"/>
    </source>
</evidence>
<evidence type="ECO:0000269" key="5">
    <source>
    </source>
</evidence>
<evidence type="ECO:0000269" key="6">
    <source>
    </source>
</evidence>
<evidence type="ECO:0000303" key="7">
    <source>
    </source>
</evidence>
<evidence type="ECO:0000303" key="8">
    <source>
    </source>
</evidence>
<evidence type="ECO:0000303" key="9">
    <source>
    </source>
</evidence>
<evidence type="ECO:0000312" key="10">
    <source>
        <dbReference type="HGNC" id="HGNC:9504"/>
    </source>
</evidence>
<evidence type="ECO:0007829" key="11">
    <source>
        <dbReference type="PDB" id="4KAX"/>
    </source>
</evidence>
<sequence>MDEDGGGEGGGVPEDLSLEEREELLDIRRRKKELIDDIERLKYEIAEVMTEIDNLTSVEESKTTQRNKQIAMGRKKFNMDPKKGIQFLIENDLLQSSPEDVAQFLYKGEGLNKTVIGDYLGERDEFNIKVLQAFVELHEFADLNLVQALRQFLWSFRLPGEAQKIDRMMEAFASRYCLCNPGVFQSTDTCYVLSFAIIMLNTSLHNHNVRDKPTAERFIAMNRGINEGGDLPEELLRNLYESIKNEPFKIPEDDGNDLTHTFFNPDREGWLLKLGGGRVKTWKRRWFILTDNCLYYFEYTTDKEPRGIIPLENLSIREVEDPRKPNCFELYNPSHKGQVIKACKTEADGRVVEGNHVVYRISAPSPEEKEEWMKSIKASISRDPFYDMLATRKRRIANKK</sequence>
<keyword id="KW-0002">3D-structure</keyword>
<keyword id="KW-0025">Alternative splicing</keyword>
<keyword id="KW-0965">Cell junction</keyword>
<keyword id="KW-1003">Cell membrane</keyword>
<keyword id="KW-0175">Coiled coil</keyword>
<keyword id="KW-0963">Cytoplasm</keyword>
<keyword id="KW-0344">Guanine-nucleotide releasing factor</keyword>
<keyword id="KW-0446">Lipid-binding</keyword>
<keyword id="KW-0472">Membrane</keyword>
<keyword id="KW-1267">Proteomics identification</keyword>
<keyword id="KW-1185">Reference proteome</keyword>
<keyword id="KW-0796">Tight junction</keyword>
<name>CYH3_HUMAN</name>
<dbReference type="EMBL" id="AJ005197">
    <property type="protein sequence ID" value="CAA06434.1"/>
    <property type="molecule type" value="mRNA"/>
</dbReference>
<dbReference type="EMBL" id="AJ223957">
    <property type="protein sequence ID" value="CAA11686.1"/>
    <property type="molecule type" value="mRNA"/>
</dbReference>
<dbReference type="EMBL" id="CH236963">
    <property type="protein sequence ID" value="EAL23717.1"/>
    <property type="molecule type" value="Genomic_DNA"/>
</dbReference>
<dbReference type="EMBL" id="CH878731">
    <property type="protein sequence ID" value="EAW55046.1"/>
    <property type="molecule type" value="Genomic_DNA"/>
</dbReference>
<dbReference type="EMBL" id="BC028717">
    <property type="protein sequence ID" value="AAH28717.1"/>
    <property type="molecule type" value="mRNA"/>
</dbReference>
<dbReference type="CCDS" id="CCDS5346.1">
    <molecule id="O43739-2"/>
</dbReference>
<dbReference type="RefSeq" id="NP_004218.1">
    <molecule id="O43739-2"/>
    <property type="nucleotide sequence ID" value="NM_004227.4"/>
</dbReference>
<dbReference type="PDB" id="4KAX">
    <property type="method" value="X-ray"/>
    <property type="resolution" value="1.85 A"/>
    <property type="chains" value="B=247-400"/>
</dbReference>
<dbReference type="PDB" id="6U3E">
    <property type="method" value="EM"/>
    <property type="resolution" value="53.00 A"/>
    <property type="chains" value="A/B=13-400"/>
</dbReference>
<dbReference type="PDB" id="6U3G">
    <property type="method" value="EM"/>
    <property type="resolution" value="53.00 A"/>
    <property type="chains" value="A/B=13-400"/>
</dbReference>
<dbReference type="PDBsum" id="4KAX"/>
<dbReference type="PDBsum" id="6U3E"/>
<dbReference type="PDBsum" id="6U3G"/>
<dbReference type="BMRB" id="O43739"/>
<dbReference type="EMDB" id="EMD-20628"/>
<dbReference type="EMDB" id="EMD-20629"/>
<dbReference type="SMR" id="O43739"/>
<dbReference type="BioGRID" id="114686">
    <property type="interactions" value="50"/>
</dbReference>
<dbReference type="CORUM" id="O43739"/>
<dbReference type="DIP" id="DIP-60444N"/>
<dbReference type="FunCoup" id="O43739">
    <property type="interactions" value="1645"/>
</dbReference>
<dbReference type="IntAct" id="O43739">
    <property type="interactions" value="20"/>
</dbReference>
<dbReference type="MINT" id="O43739"/>
<dbReference type="STRING" id="9606.ENSP00000297044"/>
<dbReference type="BindingDB" id="O43739"/>
<dbReference type="ChEMBL" id="CHEMBL3259466"/>
<dbReference type="DrugBank" id="DB01863">
    <property type="generic name" value="Inositol 1,3,4,5-Tetrakisphosphate"/>
</dbReference>
<dbReference type="DrugBank" id="DB03344">
    <property type="generic name" value="Inositol-(1,3,4,5,6)-Pentakisphosphate"/>
</dbReference>
<dbReference type="GlyGen" id="O43739">
    <property type="glycosylation" value="1 site, 1 N-linked glycan (1 site)"/>
</dbReference>
<dbReference type="iPTMnet" id="O43739"/>
<dbReference type="PhosphoSitePlus" id="O43739"/>
<dbReference type="BioMuta" id="CYTH3"/>
<dbReference type="jPOST" id="O43739"/>
<dbReference type="MassIVE" id="O43739"/>
<dbReference type="PaxDb" id="9606-ENSP00000297044"/>
<dbReference type="PeptideAtlas" id="O43739"/>
<dbReference type="ProteomicsDB" id="49142">
    <molecule id="O43739-1"/>
</dbReference>
<dbReference type="ProteomicsDB" id="49143">
    <molecule id="O43739-2"/>
</dbReference>
<dbReference type="Pumba" id="O43739"/>
<dbReference type="Antibodypedia" id="2818">
    <property type="antibodies" value="202 antibodies from 33 providers"/>
</dbReference>
<dbReference type="DNASU" id="9265"/>
<dbReference type="Ensembl" id="ENST00000350796.8">
    <molecule id="O43739-2"/>
    <property type="protein sequence ID" value="ENSP00000297044.7"/>
    <property type="gene ID" value="ENSG00000008256.17"/>
</dbReference>
<dbReference type="GeneID" id="9265"/>
<dbReference type="KEGG" id="hsa:9265"/>
<dbReference type="MANE-Select" id="ENST00000350796.8">
    <molecule id="O43739-2"/>
    <property type="protein sequence ID" value="ENSP00000297044.7"/>
    <property type="RefSeq nucleotide sequence ID" value="NM_004227.4"/>
    <property type="RefSeq protein sequence ID" value="NP_004218.1"/>
</dbReference>
<dbReference type="UCSC" id="uc003spt.4">
    <molecule id="O43739-1"/>
    <property type="organism name" value="human"/>
</dbReference>
<dbReference type="AGR" id="HGNC:9504"/>
<dbReference type="CTD" id="9265"/>
<dbReference type="DisGeNET" id="9265"/>
<dbReference type="GeneCards" id="CYTH3"/>
<dbReference type="HGNC" id="HGNC:9504">
    <property type="gene designation" value="CYTH3"/>
</dbReference>
<dbReference type="HPA" id="ENSG00000008256">
    <property type="expression patterns" value="Low tissue specificity"/>
</dbReference>
<dbReference type="MIM" id="605081">
    <property type="type" value="gene"/>
</dbReference>
<dbReference type="neXtProt" id="NX_O43739"/>
<dbReference type="OpenTargets" id="ENSG00000008256"/>
<dbReference type="PharmGKB" id="PA164718590"/>
<dbReference type="VEuPathDB" id="HostDB:ENSG00000008256"/>
<dbReference type="eggNOG" id="KOG0930">
    <property type="taxonomic scope" value="Eukaryota"/>
</dbReference>
<dbReference type="GeneTree" id="ENSGT00940000155825"/>
<dbReference type="HOGENOM" id="CLU_032820_3_0_1"/>
<dbReference type="InParanoid" id="O43739"/>
<dbReference type="OMA" id="LLAKICW"/>
<dbReference type="OrthoDB" id="430364at2759"/>
<dbReference type="PAN-GO" id="O43739">
    <property type="GO annotations" value="0 GO annotations based on evolutionary models"/>
</dbReference>
<dbReference type="PhylomeDB" id="O43739"/>
<dbReference type="TreeFam" id="TF352091"/>
<dbReference type="PathwayCommons" id="O43739"/>
<dbReference type="Reactome" id="R-HSA-6811438">
    <property type="pathway name" value="Intra-Golgi traffic"/>
</dbReference>
<dbReference type="SignaLink" id="O43739"/>
<dbReference type="BioGRID-ORCS" id="9265">
    <property type="hits" value="15 hits in 1156 CRISPR screens"/>
</dbReference>
<dbReference type="CD-CODE" id="FB4E32DD">
    <property type="entry name" value="Presynaptic clusters and postsynaptic densities"/>
</dbReference>
<dbReference type="ChiTaRS" id="CYTH3">
    <property type="organism name" value="human"/>
</dbReference>
<dbReference type="EvolutionaryTrace" id="O43739"/>
<dbReference type="GeneWiki" id="CYTH3"/>
<dbReference type="GenomeRNAi" id="9265"/>
<dbReference type="Pharos" id="O43739">
    <property type="development level" value="Tbio"/>
</dbReference>
<dbReference type="PRO" id="PR:O43739"/>
<dbReference type="Proteomes" id="UP000005640">
    <property type="component" value="Chromosome 7"/>
</dbReference>
<dbReference type="RNAct" id="O43739">
    <property type="molecule type" value="protein"/>
</dbReference>
<dbReference type="Bgee" id="ENSG00000008256">
    <property type="expression patterns" value="Expressed in endothelial cell and 184 other cell types or tissues"/>
</dbReference>
<dbReference type="GO" id="GO:0005912">
    <property type="term" value="C:adherens junction"/>
    <property type="evidence" value="ECO:0000250"/>
    <property type="project" value="UniProtKB"/>
</dbReference>
<dbReference type="GO" id="GO:0005923">
    <property type="term" value="C:bicellular tight junction"/>
    <property type="evidence" value="ECO:0000250"/>
    <property type="project" value="UniProtKB"/>
</dbReference>
<dbReference type="GO" id="GO:0005829">
    <property type="term" value="C:cytosol"/>
    <property type="evidence" value="ECO:0000314"/>
    <property type="project" value="HPA"/>
</dbReference>
<dbReference type="GO" id="GO:0000139">
    <property type="term" value="C:Golgi membrane"/>
    <property type="evidence" value="ECO:0000304"/>
    <property type="project" value="Reactome"/>
</dbReference>
<dbReference type="GO" id="GO:0005654">
    <property type="term" value="C:nucleoplasm"/>
    <property type="evidence" value="ECO:0000314"/>
    <property type="project" value="HPA"/>
</dbReference>
<dbReference type="GO" id="GO:0005886">
    <property type="term" value="C:plasma membrane"/>
    <property type="evidence" value="ECO:0000314"/>
    <property type="project" value="UniProtKB"/>
</dbReference>
<dbReference type="GO" id="GO:0001726">
    <property type="term" value="C:ruffle"/>
    <property type="evidence" value="ECO:0007669"/>
    <property type="project" value="Ensembl"/>
</dbReference>
<dbReference type="GO" id="GO:0005085">
    <property type="term" value="F:guanyl-nucleotide exchange factor activity"/>
    <property type="evidence" value="ECO:0000314"/>
    <property type="project" value="UniProtKB"/>
</dbReference>
<dbReference type="GO" id="GO:0005547">
    <property type="term" value="F:phosphatidylinositol-3,4,5-trisphosphate binding"/>
    <property type="evidence" value="ECO:0000314"/>
    <property type="project" value="UniProtKB"/>
</dbReference>
<dbReference type="GO" id="GO:0090162">
    <property type="term" value="P:establishment of epithelial cell polarity"/>
    <property type="evidence" value="ECO:0000250"/>
    <property type="project" value="UniProtKB"/>
</dbReference>
<dbReference type="GO" id="GO:0048193">
    <property type="term" value="P:Golgi vesicle transport"/>
    <property type="evidence" value="ECO:0000315"/>
    <property type="project" value="UniProtKB"/>
</dbReference>
<dbReference type="GO" id="GO:0045785">
    <property type="term" value="P:positive regulation of cell adhesion"/>
    <property type="evidence" value="ECO:0007669"/>
    <property type="project" value="Ensembl"/>
</dbReference>
<dbReference type="GO" id="GO:0032012">
    <property type="term" value="P:regulation of ARF protein signal transduction"/>
    <property type="evidence" value="ECO:0007669"/>
    <property type="project" value="InterPro"/>
</dbReference>
<dbReference type="CDD" id="cd01252">
    <property type="entry name" value="PH_GRP1-like"/>
    <property type="match status" value="1"/>
</dbReference>
<dbReference type="CDD" id="cd00171">
    <property type="entry name" value="Sec7"/>
    <property type="match status" value="1"/>
</dbReference>
<dbReference type="FunFam" id="1.10.1000.11:FF:000002">
    <property type="entry name" value="Cytohesin 1"/>
    <property type="match status" value="1"/>
</dbReference>
<dbReference type="FunFam" id="1.10.220.20:FF:000003">
    <property type="entry name" value="Cytohesin 1"/>
    <property type="match status" value="1"/>
</dbReference>
<dbReference type="FunFam" id="2.30.29.30:FF:000009">
    <property type="entry name" value="Cytohesin 1"/>
    <property type="match status" value="1"/>
</dbReference>
<dbReference type="Gene3D" id="1.10.220.20">
    <property type="match status" value="1"/>
</dbReference>
<dbReference type="Gene3D" id="1.10.1000.11">
    <property type="entry name" value="Arf Nucleotide-binding Site Opener,domain 2"/>
    <property type="match status" value="1"/>
</dbReference>
<dbReference type="Gene3D" id="2.30.29.30">
    <property type="entry name" value="Pleckstrin-homology domain (PH domain)/Phosphotyrosine-binding domain (PTB)"/>
    <property type="match status" value="1"/>
</dbReference>
<dbReference type="InterPro" id="IPR011993">
    <property type="entry name" value="PH-like_dom_sf"/>
</dbReference>
<dbReference type="InterPro" id="IPR001849">
    <property type="entry name" value="PH_domain"/>
</dbReference>
<dbReference type="InterPro" id="IPR023394">
    <property type="entry name" value="Sec7_C_sf"/>
</dbReference>
<dbReference type="InterPro" id="IPR000904">
    <property type="entry name" value="Sec7_dom"/>
</dbReference>
<dbReference type="InterPro" id="IPR035999">
    <property type="entry name" value="Sec7_dom_sf"/>
</dbReference>
<dbReference type="PANTHER" id="PTHR10663:SF320">
    <property type="entry name" value="CYTOHESIN-3"/>
    <property type="match status" value="1"/>
</dbReference>
<dbReference type="PANTHER" id="PTHR10663">
    <property type="entry name" value="GUANYL-NUCLEOTIDE EXCHANGE FACTOR"/>
    <property type="match status" value="1"/>
</dbReference>
<dbReference type="Pfam" id="PF00169">
    <property type="entry name" value="PH"/>
    <property type="match status" value="1"/>
</dbReference>
<dbReference type="Pfam" id="PF01369">
    <property type="entry name" value="Sec7"/>
    <property type="match status" value="1"/>
</dbReference>
<dbReference type="SMART" id="SM00233">
    <property type="entry name" value="PH"/>
    <property type="match status" value="1"/>
</dbReference>
<dbReference type="SMART" id="SM00222">
    <property type="entry name" value="Sec7"/>
    <property type="match status" value="1"/>
</dbReference>
<dbReference type="SUPFAM" id="SSF50729">
    <property type="entry name" value="PH domain-like"/>
    <property type="match status" value="1"/>
</dbReference>
<dbReference type="SUPFAM" id="SSF48425">
    <property type="entry name" value="Sec7 domain"/>
    <property type="match status" value="1"/>
</dbReference>
<dbReference type="PROSITE" id="PS50003">
    <property type="entry name" value="PH_DOMAIN"/>
    <property type="match status" value="1"/>
</dbReference>
<dbReference type="PROSITE" id="PS50190">
    <property type="entry name" value="SEC7"/>
    <property type="match status" value="1"/>
</dbReference>
<proteinExistence type="evidence at protein level"/>
<gene>
    <name evidence="10" type="primary">CYTH3</name>
    <name type="synonym">ARNO3</name>
    <name type="synonym">GRP1</name>
    <name type="synonym">PSCD3</name>
</gene>
<organism>
    <name type="scientific">Homo sapiens</name>
    <name type="common">Human</name>
    <dbReference type="NCBI Taxonomy" id="9606"/>
    <lineage>
        <taxon>Eukaryota</taxon>
        <taxon>Metazoa</taxon>
        <taxon>Chordata</taxon>
        <taxon>Craniata</taxon>
        <taxon>Vertebrata</taxon>
        <taxon>Euteleostomi</taxon>
        <taxon>Mammalia</taxon>
        <taxon>Eutheria</taxon>
        <taxon>Euarchontoglires</taxon>
        <taxon>Primates</taxon>
        <taxon>Haplorrhini</taxon>
        <taxon>Catarrhini</taxon>
        <taxon>Hominidae</taxon>
        <taxon>Homo</taxon>
    </lineage>
</organism>
<accession>O43739</accession>
<accession>A4D2N8</accession>
<protein>
    <recommendedName>
        <fullName>Cytohesin-3</fullName>
    </recommendedName>
    <alternativeName>
        <fullName>ARF nucleotide-binding site opener 3</fullName>
        <shortName>Protein ARNO3</shortName>
    </alternativeName>
    <alternativeName>
        <fullName>General receptor of phosphoinositides 1</fullName>
        <shortName>Grp1</shortName>
    </alternativeName>
    <alternativeName>
        <fullName>PH, SEC7 and coiled-coil domain-containing protein 3</fullName>
    </alternativeName>
</protein>
<comment type="function">
    <text evidence="1 5 6">Promotes guanine-nucleotide exchange on ARF1 and ARF6. Promotes the activation of ARF factors through replacement of GDP with GTP. Plays a role in the epithelial polarization (By similarity).</text>
</comment>
<comment type="subunit">
    <text evidence="1 5">Interacts with TAMALIN (By similarity). Interacts with ARF6 (PubMed:23940353). Interacts with FRMD4A (By similarity). Interacts with FRMD4B (By similarity).</text>
</comment>
<comment type="interaction">
    <interactant intactId="EBI-741648">
        <id>O43739</id>
    </interactant>
    <interactant intactId="EBI-10185348">
        <id>Q96HB5-4</id>
        <label>CCDC120</label>
    </interactant>
    <organismsDiffer>false</organismsDiffer>
    <experiments>3</experiments>
</comment>
<comment type="interaction">
    <interactant intactId="EBI-741648">
        <id>O43739</id>
    </interactant>
    <interactant intactId="EBI-741671">
        <id>Q969H4</id>
        <label>CNKSR1</label>
    </interactant>
    <organismsDiffer>false</organismsDiffer>
    <experiments>5</experiments>
</comment>
<comment type="interaction">
    <interactant intactId="EBI-741648">
        <id>O43739</id>
    </interactant>
    <interactant intactId="EBI-6872807">
        <id>Q8N0S2</id>
        <label>SYCE1</label>
    </interactant>
    <organismsDiffer>false</organismsDiffer>
    <experiments>4</experiments>
</comment>
<comment type="interaction">
    <interactant intactId="EBI-11974015">
        <id>O43739-2</id>
    </interactant>
    <interactant intactId="EBI-638194">
        <id>P53365</id>
        <label>ARFIP2</label>
    </interactant>
    <organismsDiffer>false</organismsDiffer>
    <experiments>3</experiments>
</comment>
<comment type="interaction">
    <interactant intactId="EBI-11974015">
        <id>O43739-2</id>
    </interactant>
    <interactant intactId="EBI-744556">
        <id>Q96HB5</id>
        <label>CCDC120</label>
    </interactant>
    <organismsDiffer>false</organismsDiffer>
    <experiments>4</experiments>
</comment>
<comment type="interaction">
    <interactant intactId="EBI-11974015">
        <id>O43739-2</id>
    </interactant>
    <interactant intactId="EBI-741671">
        <id>Q969H4</id>
        <label>CNKSR1</label>
    </interactant>
    <organismsDiffer>false</organismsDiffer>
    <experiments>4</experiments>
</comment>
<comment type="interaction">
    <interactant intactId="EBI-11974015">
        <id>O43739-2</id>
    </interactant>
    <interactant intactId="EBI-12823003">
        <id>P80217-2</id>
        <label>IFI35</label>
    </interactant>
    <organismsDiffer>false</organismsDiffer>
    <experiments>3</experiments>
</comment>
<comment type="interaction">
    <interactant intactId="EBI-11974015">
        <id>O43739-2</id>
    </interactant>
    <interactant intactId="EBI-4401965">
        <id>Q8WWN9</id>
        <label>IPCEF1</label>
    </interactant>
    <organismsDiffer>false</organismsDiffer>
    <experiments>3</experiments>
</comment>
<comment type="subcellular location">
    <subcellularLocation>
        <location>Cytoplasm</location>
        <location>Cytosol</location>
    </subcellularLocation>
    <subcellularLocation>
        <location evidence="1">Cell membrane</location>
        <topology evidence="1">Peripheral membrane protein</topology>
    </subcellularLocation>
    <subcellularLocation>
        <location evidence="1">Cell junction</location>
        <location evidence="1">Adherens junction</location>
    </subcellularLocation>
    <subcellularLocation>
        <location evidence="1">Cell junction</location>
        <location evidence="1">Tight junction</location>
    </subcellularLocation>
    <text evidence="1">Translocates from the cytosol to membranes enriched in phosphatidylinositol 3,4,5-trisphosphate.</text>
</comment>
<comment type="alternative products">
    <event type="alternative splicing"/>
    <isoform>
        <id>O43739-1</id>
        <name>1</name>
        <sequence type="displayed"/>
    </isoform>
    <isoform>
        <id>O43739-2</id>
        <name>2</name>
        <sequence type="described" ref="VSP_006039"/>
    </isoform>
</comment>
<comment type="tissue specificity">
    <text>Almost absent from liver, thymus and peripheral blood lymphocytes.</text>
</comment>
<comment type="domain">
    <text>Binds via its PH domain to the inositol head group of phosphatidylinositol 3,4,5-trisphosphate.</text>
</comment>
<comment type="domain">
    <text>Autoinhibited by its C-terminal basic region.</text>
</comment>
<feature type="chain" id="PRO_0000120200" description="Cytohesin-3">
    <location>
        <begin position="1"/>
        <end position="400"/>
    </location>
</feature>
<feature type="domain" description="SEC7" evidence="4">
    <location>
        <begin position="77"/>
        <end position="206"/>
    </location>
</feature>
<feature type="domain" description="PH" evidence="3">
    <location>
        <begin position="264"/>
        <end position="381"/>
    </location>
</feature>
<feature type="region of interest" description="C-terminal autoinhibitory region" evidence="5">
    <location>
        <begin position="392"/>
        <end position="400"/>
    </location>
</feature>
<feature type="coiled-coil region" evidence="2">
    <location>
        <begin position="14"/>
        <end position="61"/>
    </location>
</feature>
<feature type="binding site">
    <location>
        <begin position="273"/>
        <end position="281"/>
    </location>
    <ligand>
        <name>a 1,2-diacyl-sn-glycero-3-phospho-(1D-myo-inositol-3,4,5-trisphosphate)</name>
        <dbReference type="ChEBI" id="CHEBI:57836"/>
    </ligand>
</feature>
<feature type="binding site" evidence="5">
    <location>
        <position position="285"/>
    </location>
    <ligand>
        <name>a 1,2-diacyl-sn-glycero-3-phospho-(1D-myo-inositol-3,4,5-trisphosphate)</name>
        <dbReference type="ChEBI" id="CHEBI:57836"/>
    </ligand>
</feature>
<feature type="binding site" evidence="5">
    <location>
        <position position="296"/>
    </location>
    <ligand>
        <name>a 1,2-diacyl-sn-glycero-3-phospho-(1D-myo-inositol-3,4,5-trisphosphate)</name>
        <dbReference type="ChEBI" id="CHEBI:57836"/>
    </ligand>
</feature>
<feature type="binding site" evidence="5">
    <location>
        <position position="306"/>
    </location>
    <ligand>
        <name>a 1,2-diacyl-sn-glycero-3-phospho-(1D-myo-inositol-3,4,5-trisphosphate)</name>
        <dbReference type="ChEBI" id="CHEBI:57836"/>
    </ligand>
</feature>
<feature type="binding site" evidence="5">
    <location>
        <position position="355"/>
    </location>
    <ligand>
        <name>a 1,2-diacyl-sn-glycero-3-phospho-(1D-myo-inositol-3,4,5-trisphosphate)</name>
        <dbReference type="ChEBI" id="CHEBI:57836"/>
    </ligand>
</feature>
<feature type="splice variant" id="VSP_006039" description="In isoform 2." evidence="7 8 9">
    <location>
        <position position="277"/>
    </location>
</feature>
<feature type="mutagenesis site" description="Abolishes autoinhibition and increases guanine-nucleotide exchange activity." evidence="5">
    <original>NKK</original>
    <variation>AAA</variation>
    <location>
        <begin position="398"/>
        <end position="400"/>
    </location>
</feature>
<feature type="helix" evidence="11">
    <location>
        <begin position="259"/>
        <end position="262"/>
    </location>
</feature>
<feature type="strand" evidence="11">
    <location>
        <begin position="266"/>
        <end position="274"/>
    </location>
</feature>
<feature type="strand" evidence="11">
    <location>
        <begin position="282"/>
        <end position="290"/>
    </location>
</feature>
<feature type="strand" evidence="11">
    <location>
        <begin position="293"/>
        <end position="299"/>
    </location>
</feature>
<feature type="strand" evidence="11">
    <location>
        <begin position="306"/>
        <end position="310"/>
    </location>
</feature>
<feature type="strand" evidence="11">
    <location>
        <begin position="315"/>
        <end position="319"/>
    </location>
</feature>
<feature type="strand" evidence="11">
    <location>
        <begin position="322"/>
        <end position="331"/>
    </location>
</feature>
<feature type="strand" evidence="11">
    <location>
        <begin position="333"/>
        <end position="335"/>
    </location>
</feature>
<feature type="strand" evidence="11">
    <location>
        <begin position="343"/>
        <end position="345"/>
    </location>
</feature>
<feature type="strand" evidence="11">
    <location>
        <begin position="351"/>
        <end position="353"/>
    </location>
</feature>
<feature type="strand" evidence="11">
    <location>
        <begin position="359"/>
        <end position="362"/>
    </location>
</feature>
<feature type="helix" evidence="11">
    <location>
        <begin position="366"/>
        <end position="379"/>
    </location>
</feature>
<feature type="helix" evidence="11">
    <location>
        <begin position="384"/>
        <end position="396"/>
    </location>
</feature>